<proteinExistence type="inferred from homology"/>
<comment type="function">
    <text evidence="1">This protein is located at the 30S-50S ribosomal subunit interface and may play a role in the structure and function of the aminoacyl-tRNA binding site.</text>
</comment>
<comment type="similarity">
    <text evidence="1">Belongs to the bacterial ribosomal protein bL19 family.</text>
</comment>
<dbReference type="EMBL" id="CP001052">
    <property type="protein sequence ID" value="ACD17368.1"/>
    <property type="molecule type" value="Genomic_DNA"/>
</dbReference>
<dbReference type="RefSeq" id="WP_012433948.1">
    <property type="nucleotide sequence ID" value="NC_010681.1"/>
</dbReference>
<dbReference type="SMR" id="B2T604"/>
<dbReference type="STRING" id="398527.Bphyt_2974"/>
<dbReference type="GeneID" id="97307993"/>
<dbReference type="KEGG" id="bpy:Bphyt_2974"/>
<dbReference type="eggNOG" id="COG0335">
    <property type="taxonomic scope" value="Bacteria"/>
</dbReference>
<dbReference type="HOGENOM" id="CLU_103507_1_0_4"/>
<dbReference type="OrthoDB" id="9803541at2"/>
<dbReference type="Proteomes" id="UP000001739">
    <property type="component" value="Chromosome 1"/>
</dbReference>
<dbReference type="GO" id="GO:0022625">
    <property type="term" value="C:cytosolic large ribosomal subunit"/>
    <property type="evidence" value="ECO:0007669"/>
    <property type="project" value="TreeGrafter"/>
</dbReference>
<dbReference type="GO" id="GO:0003735">
    <property type="term" value="F:structural constituent of ribosome"/>
    <property type="evidence" value="ECO:0007669"/>
    <property type="project" value="InterPro"/>
</dbReference>
<dbReference type="GO" id="GO:0006412">
    <property type="term" value="P:translation"/>
    <property type="evidence" value="ECO:0007669"/>
    <property type="project" value="UniProtKB-UniRule"/>
</dbReference>
<dbReference type="FunFam" id="2.30.30.790:FF:000001">
    <property type="entry name" value="50S ribosomal protein L19"/>
    <property type="match status" value="1"/>
</dbReference>
<dbReference type="Gene3D" id="2.30.30.790">
    <property type="match status" value="1"/>
</dbReference>
<dbReference type="HAMAP" id="MF_00402">
    <property type="entry name" value="Ribosomal_bL19"/>
    <property type="match status" value="1"/>
</dbReference>
<dbReference type="InterPro" id="IPR001857">
    <property type="entry name" value="Ribosomal_bL19"/>
</dbReference>
<dbReference type="InterPro" id="IPR018257">
    <property type="entry name" value="Ribosomal_bL19_CS"/>
</dbReference>
<dbReference type="InterPro" id="IPR038657">
    <property type="entry name" value="Ribosomal_bL19_sf"/>
</dbReference>
<dbReference type="InterPro" id="IPR008991">
    <property type="entry name" value="Translation_prot_SH3-like_sf"/>
</dbReference>
<dbReference type="NCBIfam" id="TIGR01024">
    <property type="entry name" value="rplS_bact"/>
    <property type="match status" value="1"/>
</dbReference>
<dbReference type="PANTHER" id="PTHR15680:SF9">
    <property type="entry name" value="LARGE RIBOSOMAL SUBUNIT PROTEIN BL19M"/>
    <property type="match status" value="1"/>
</dbReference>
<dbReference type="PANTHER" id="PTHR15680">
    <property type="entry name" value="RIBOSOMAL PROTEIN L19"/>
    <property type="match status" value="1"/>
</dbReference>
<dbReference type="Pfam" id="PF01245">
    <property type="entry name" value="Ribosomal_L19"/>
    <property type="match status" value="1"/>
</dbReference>
<dbReference type="PIRSF" id="PIRSF002191">
    <property type="entry name" value="Ribosomal_L19"/>
    <property type="match status" value="1"/>
</dbReference>
<dbReference type="PRINTS" id="PR00061">
    <property type="entry name" value="RIBOSOMALL19"/>
</dbReference>
<dbReference type="SUPFAM" id="SSF50104">
    <property type="entry name" value="Translation proteins SH3-like domain"/>
    <property type="match status" value="1"/>
</dbReference>
<dbReference type="PROSITE" id="PS01015">
    <property type="entry name" value="RIBOSOMAL_L19"/>
    <property type="match status" value="1"/>
</dbReference>
<name>RL19_PARPJ</name>
<reference key="1">
    <citation type="journal article" date="2011" name="J. Bacteriol.">
        <title>Complete genome sequence of the plant growth-promoting endophyte Burkholderia phytofirmans strain PsJN.</title>
        <authorList>
            <person name="Weilharter A."/>
            <person name="Mitter B."/>
            <person name="Shin M.V."/>
            <person name="Chain P.S."/>
            <person name="Nowak J."/>
            <person name="Sessitsch A."/>
        </authorList>
    </citation>
    <scope>NUCLEOTIDE SEQUENCE [LARGE SCALE GENOMIC DNA]</scope>
    <source>
        <strain>DSM 17436 / LMG 22146 / PsJN</strain>
    </source>
</reference>
<gene>
    <name evidence="1" type="primary">rplS</name>
    <name type="ordered locus">Bphyt_2974</name>
</gene>
<feature type="chain" id="PRO_1000193803" description="Large ribosomal subunit protein bL19">
    <location>
        <begin position="1"/>
        <end position="129"/>
    </location>
</feature>
<keyword id="KW-0687">Ribonucleoprotein</keyword>
<keyword id="KW-0689">Ribosomal protein</keyword>
<sequence length="129" mass="14357">MNLIAILEQEEIGRALGEKTIPEFAPGDTVIVSVNVVEGTRKRVQAYEGVVIAKRNRGLNSSFIVRKISSGEGVERTFQTYSPLLASIVVKRRGDVRRAKLYYLRDRSGKSARIKEKLVAKKDRAAPEA</sequence>
<evidence type="ECO:0000255" key="1">
    <source>
        <dbReference type="HAMAP-Rule" id="MF_00402"/>
    </source>
</evidence>
<evidence type="ECO:0000305" key="2"/>
<organism>
    <name type="scientific">Paraburkholderia phytofirmans (strain DSM 17436 / LMG 22146 / PsJN)</name>
    <name type="common">Burkholderia phytofirmans</name>
    <dbReference type="NCBI Taxonomy" id="398527"/>
    <lineage>
        <taxon>Bacteria</taxon>
        <taxon>Pseudomonadati</taxon>
        <taxon>Pseudomonadota</taxon>
        <taxon>Betaproteobacteria</taxon>
        <taxon>Burkholderiales</taxon>
        <taxon>Burkholderiaceae</taxon>
        <taxon>Paraburkholderia</taxon>
    </lineage>
</organism>
<protein>
    <recommendedName>
        <fullName evidence="1">Large ribosomal subunit protein bL19</fullName>
    </recommendedName>
    <alternativeName>
        <fullName evidence="2">50S ribosomal protein L19</fullName>
    </alternativeName>
</protein>
<accession>B2T604</accession>